<evidence type="ECO:0000255" key="1">
    <source>
        <dbReference type="HAMAP-Rule" id="MF_00191"/>
    </source>
</evidence>
<organism>
    <name type="scientific">Francisella tularensis subsp. tularensis (strain FSC 198)</name>
    <dbReference type="NCBI Taxonomy" id="393115"/>
    <lineage>
        <taxon>Bacteria</taxon>
        <taxon>Pseudomonadati</taxon>
        <taxon>Pseudomonadota</taxon>
        <taxon>Gammaproteobacteria</taxon>
        <taxon>Thiotrichales</taxon>
        <taxon>Francisellaceae</taxon>
        <taxon>Francisella</taxon>
    </lineage>
</organism>
<keyword id="KW-0004">4Fe-4S</keyword>
<keyword id="KW-0408">Iron</keyword>
<keyword id="KW-0411">Iron-sulfur</keyword>
<keyword id="KW-0414">Isoprene biosynthesis</keyword>
<keyword id="KW-0479">Metal-binding</keyword>
<keyword id="KW-0560">Oxidoreductase</keyword>
<comment type="function">
    <text evidence="1">Catalyzes the conversion of 1-hydroxy-2-methyl-2-(E)-butenyl 4-diphosphate (HMBPP) into a mixture of isopentenyl diphosphate (IPP) and dimethylallyl diphosphate (DMAPP). Acts in the terminal step of the DOXP/MEP pathway for isoprenoid precursor biosynthesis.</text>
</comment>
<comment type="catalytic activity">
    <reaction evidence="1">
        <text>isopentenyl diphosphate + 2 oxidized [2Fe-2S]-[ferredoxin] + H2O = (2E)-4-hydroxy-3-methylbut-2-enyl diphosphate + 2 reduced [2Fe-2S]-[ferredoxin] + 2 H(+)</text>
        <dbReference type="Rhea" id="RHEA:24488"/>
        <dbReference type="Rhea" id="RHEA-COMP:10000"/>
        <dbReference type="Rhea" id="RHEA-COMP:10001"/>
        <dbReference type="ChEBI" id="CHEBI:15377"/>
        <dbReference type="ChEBI" id="CHEBI:15378"/>
        <dbReference type="ChEBI" id="CHEBI:33737"/>
        <dbReference type="ChEBI" id="CHEBI:33738"/>
        <dbReference type="ChEBI" id="CHEBI:128753"/>
        <dbReference type="ChEBI" id="CHEBI:128769"/>
        <dbReference type="EC" id="1.17.7.4"/>
    </reaction>
</comment>
<comment type="catalytic activity">
    <reaction evidence="1">
        <text>dimethylallyl diphosphate + 2 oxidized [2Fe-2S]-[ferredoxin] + H2O = (2E)-4-hydroxy-3-methylbut-2-enyl diphosphate + 2 reduced [2Fe-2S]-[ferredoxin] + 2 H(+)</text>
        <dbReference type="Rhea" id="RHEA:24825"/>
        <dbReference type="Rhea" id="RHEA-COMP:10000"/>
        <dbReference type="Rhea" id="RHEA-COMP:10001"/>
        <dbReference type="ChEBI" id="CHEBI:15377"/>
        <dbReference type="ChEBI" id="CHEBI:15378"/>
        <dbReference type="ChEBI" id="CHEBI:33737"/>
        <dbReference type="ChEBI" id="CHEBI:33738"/>
        <dbReference type="ChEBI" id="CHEBI:57623"/>
        <dbReference type="ChEBI" id="CHEBI:128753"/>
        <dbReference type="EC" id="1.17.7.4"/>
    </reaction>
</comment>
<comment type="cofactor">
    <cofactor evidence="1">
        <name>[4Fe-4S] cluster</name>
        <dbReference type="ChEBI" id="CHEBI:49883"/>
    </cofactor>
    <text evidence="1">Binds 1 [4Fe-4S] cluster per subunit.</text>
</comment>
<comment type="pathway">
    <text evidence="1">Isoprenoid biosynthesis; dimethylallyl diphosphate biosynthesis; dimethylallyl diphosphate from (2E)-4-hydroxy-3-methylbutenyl diphosphate: step 1/1.</text>
</comment>
<comment type="pathway">
    <text evidence="1">Isoprenoid biosynthesis; isopentenyl diphosphate biosynthesis via DXP pathway; isopentenyl diphosphate from 1-deoxy-D-xylulose 5-phosphate: step 6/6.</text>
</comment>
<comment type="similarity">
    <text evidence="1">Belongs to the IspH family.</text>
</comment>
<feature type="chain" id="PRO_1000021120" description="4-hydroxy-3-methylbut-2-enyl diphosphate reductase">
    <location>
        <begin position="1"/>
        <end position="318"/>
    </location>
</feature>
<feature type="active site" description="Proton donor" evidence="1">
    <location>
        <position position="126"/>
    </location>
</feature>
<feature type="binding site" evidence="1">
    <location>
        <position position="12"/>
    </location>
    <ligand>
        <name>[4Fe-4S] cluster</name>
        <dbReference type="ChEBI" id="CHEBI:49883"/>
    </ligand>
</feature>
<feature type="binding site" evidence="1">
    <location>
        <position position="41"/>
    </location>
    <ligand>
        <name>(2E)-4-hydroxy-3-methylbut-2-enyl diphosphate</name>
        <dbReference type="ChEBI" id="CHEBI:128753"/>
    </ligand>
</feature>
<feature type="binding site" evidence="1">
    <location>
        <position position="41"/>
    </location>
    <ligand>
        <name>dimethylallyl diphosphate</name>
        <dbReference type="ChEBI" id="CHEBI:57623"/>
    </ligand>
</feature>
<feature type="binding site" evidence="1">
    <location>
        <position position="41"/>
    </location>
    <ligand>
        <name>isopentenyl diphosphate</name>
        <dbReference type="ChEBI" id="CHEBI:128769"/>
    </ligand>
</feature>
<feature type="binding site" evidence="1">
    <location>
        <position position="74"/>
    </location>
    <ligand>
        <name>(2E)-4-hydroxy-3-methylbut-2-enyl diphosphate</name>
        <dbReference type="ChEBI" id="CHEBI:128753"/>
    </ligand>
</feature>
<feature type="binding site" evidence="1">
    <location>
        <position position="74"/>
    </location>
    <ligand>
        <name>dimethylallyl diphosphate</name>
        <dbReference type="ChEBI" id="CHEBI:57623"/>
    </ligand>
</feature>
<feature type="binding site" evidence="1">
    <location>
        <position position="74"/>
    </location>
    <ligand>
        <name>isopentenyl diphosphate</name>
        <dbReference type="ChEBI" id="CHEBI:128769"/>
    </ligand>
</feature>
<feature type="binding site" evidence="1">
    <location>
        <position position="96"/>
    </location>
    <ligand>
        <name>[4Fe-4S] cluster</name>
        <dbReference type="ChEBI" id="CHEBI:49883"/>
    </ligand>
</feature>
<feature type="binding site" evidence="1">
    <location>
        <position position="124"/>
    </location>
    <ligand>
        <name>(2E)-4-hydroxy-3-methylbut-2-enyl diphosphate</name>
        <dbReference type="ChEBI" id="CHEBI:128753"/>
    </ligand>
</feature>
<feature type="binding site" evidence="1">
    <location>
        <position position="124"/>
    </location>
    <ligand>
        <name>dimethylallyl diphosphate</name>
        <dbReference type="ChEBI" id="CHEBI:57623"/>
    </ligand>
</feature>
<feature type="binding site" evidence="1">
    <location>
        <position position="124"/>
    </location>
    <ligand>
        <name>isopentenyl diphosphate</name>
        <dbReference type="ChEBI" id="CHEBI:128769"/>
    </ligand>
</feature>
<feature type="binding site" evidence="1">
    <location>
        <position position="167"/>
    </location>
    <ligand>
        <name>(2E)-4-hydroxy-3-methylbut-2-enyl diphosphate</name>
        <dbReference type="ChEBI" id="CHEBI:128753"/>
    </ligand>
</feature>
<feature type="binding site" evidence="1">
    <location>
        <position position="197"/>
    </location>
    <ligand>
        <name>[4Fe-4S] cluster</name>
        <dbReference type="ChEBI" id="CHEBI:49883"/>
    </ligand>
</feature>
<feature type="binding site" evidence="1">
    <location>
        <position position="225"/>
    </location>
    <ligand>
        <name>(2E)-4-hydroxy-3-methylbut-2-enyl diphosphate</name>
        <dbReference type="ChEBI" id="CHEBI:128753"/>
    </ligand>
</feature>
<feature type="binding site" evidence="1">
    <location>
        <position position="225"/>
    </location>
    <ligand>
        <name>dimethylallyl diphosphate</name>
        <dbReference type="ChEBI" id="CHEBI:57623"/>
    </ligand>
</feature>
<feature type="binding site" evidence="1">
    <location>
        <position position="225"/>
    </location>
    <ligand>
        <name>isopentenyl diphosphate</name>
        <dbReference type="ChEBI" id="CHEBI:128769"/>
    </ligand>
</feature>
<feature type="binding site" evidence="1">
    <location>
        <position position="226"/>
    </location>
    <ligand>
        <name>(2E)-4-hydroxy-3-methylbut-2-enyl diphosphate</name>
        <dbReference type="ChEBI" id="CHEBI:128753"/>
    </ligand>
</feature>
<feature type="binding site" evidence="1">
    <location>
        <position position="226"/>
    </location>
    <ligand>
        <name>dimethylallyl diphosphate</name>
        <dbReference type="ChEBI" id="CHEBI:57623"/>
    </ligand>
</feature>
<feature type="binding site" evidence="1">
    <location>
        <position position="226"/>
    </location>
    <ligand>
        <name>isopentenyl diphosphate</name>
        <dbReference type="ChEBI" id="CHEBI:128769"/>
    </ligand>
</feature>
<feature type="binding site" evidence="1">
    <location>
        <position position="227"/>
    </location>
    <ligand>
        <name>(2E)-4-hydroxy-3-methylbut-2-enyl diphosphate</name>
        <dbReference type="ChEBI" id="CHEBI:128753"/>
    </ligand>
</feature>
<feature type="binding site" evidence="1">
    <location>
        <position position="227"/>
    </location>
    <ligand>
        <name>dimethylallyl diphosphate</name>
        <dbReference type="ChEBI" id="CHEBI:57623"/>
    </ligand>
</feature>
<feature type="binding site" evidence="1">
    <location>
        <position position="227"/>
    </location>
    <ligand>
        <name>isopentenyl diphosphate</name>
        <dbReference type="ChEBI" id="CHEBI:128769"/>
    </ligand>
</feature>
<feature type="binding site" evidence="1">
    <location>
        <position position="269"/>
    </location>
    <ligand>
        <name>(2E)-4-hydroxy-3-methylbut-2-enyl diphosphate</name>
        <dbReference type="ChEBI" id="CHEBI:128753"/>
    </ligand>
</feature>
<feature type="binding site" evidence="1">
    <location>
        <position position="269"/>
    </location>
    <ligand>
        <name>dimethylallyl diphosphate</name>
        <dbReference type="ChEBI" id="CHEBI:57623"/>
    </ligand>
</feature>
<feature type="binding site" evidence="1">
    <location>
        <position position="269"/>
    </location>
    <ligand>
        <name>isopentenyl diphosphate</name>
        <dbReference type="ChEBI" id="CHEBI:128769"/>
    </ligand>
</feature>
<dbReference type="EC" id="1.17.7.4" evidence="1"/>
<dbReference type="EMBL" id="AM286280">
    <property type="protein sequence ID" value="CAL08849.1"/>
    <property type="molecule type" value="Genomic_DNA"/>
</dbReference>
<dbReference type="RefSeq" id="WP_003020788.1">
    <property type="nucleotide sequence ID" value="NC_008245.1"/>
</dbReference>
<dbReference type="SMR" id="Q14I06"/>
<dbReference type="KEGG" id="ftf:FTF0833"/>
<dbReference type="HOGENOM" id="CLU_027486_1_0_6"/>
<dbReference type="UniPathway" id="UPA00056">
    <property type="reaction ID" value="UER00097"/>
</dbReference>
<dbReference type="UniPathway" id="UPA00059">
    <property type="reaction ID" value="UER00105"/>
</dbReference>
<dbReference type="GO" id="GO:0051539">
    <property type="term" value="F:4 iron, 4 sulfur cluster binding"/>
    <property type="evidence" value="ECO:0007669"/>
    <property type="project" value="UniProtKB-UniRule"/>
</dbReference>
<dbReference type="GO" id="GO:0051745">
    <property type="term" value="F:4-hydroxy-3-methylbut-2-enyl diphosphate reductase activity"/>
    <property type="evidence" value="ECO:0007669"/>
    <property type="project" value="UniProtKB-UniRule"/>
</dbReference>
<dbReference type="GO" id="GO:0046872">
    <property type="term" value="F:metal ion binding"/>
    <property type="evidence" value="ECO:0007669"/>
    <property type="project" value="UniProtKB-KW"/>
</dbReference>
<dbReference type="GO" id="GO:0050992">
    <property type="term" value="P:dimethylallyl diphosphate biosynthetic process"/>
    <property type="evidence" value="ECO:0007669"/>
    <property type="project" value="UniProtKB-UniRule"/>
</dbReference>
<dbReference type="GO" id="GO:0019288">
    <property type="term" value="P:isopentenyl diphosphate biosynthetic process, methylerythritol 4-phosphate pathway"/>
    <property type="evidence" value="ECO:0007669"/>
    <property type="project" value="UniProtKB-UniRule"/>
</dbReference>
<dbReference type="GO" id="GO:0016114">
    <property type="term" value="P:terpenoid biosynthetic process"/>
    <property type="evidence" value="ECO:0007669"/>
    <property type="project" value="UniProtKB-UniRule"/>
</dbReference>
<dbReference type="CDD" id="cd13944">
    <property type="entry name" value="lytB_ispH"/>
    <property type="match status" value="1"/>
</dbReference>
<dbReference type="Gene3D" id="3.40.50.11270">
    <property type="match status" value="1"/>
</dbReference>
<dbReference type="Gene3D" id="3.40.1010.20">
    <property type="entry name" value="4-hydroxy-3-methylbut-2-enyl diphosphate reductase, catalytic domain"/>
    <property type="match status" value="2"/>
</dbReference>
<dbReference type="HAMAP" id="MF_00191">
    <property type="entry name" value="IspH"/>
    <property type="match status" value="1"/>
</dbReference>
<dbReference type="InterPro" id="IPR003451">
    <property type="entry name" value="LytB/IspH"/>
</dbReference>
<dbReference type="NCBIfam" id="TIGR00216">
    <property type="entry name" value="ispH_lytB"/>
    <property type="match status" value="1"/>
</dbReference>
<dbReference type="NCBIfam" id="NF002188">
    <property type="entry name" value="PRK01045.1-2"/>
    <property type="match status" value="1"/>
</dbReference>
<dbReference type="NCBIfam" id="NF002190">
    <property type="entry name" value="PRK01045.1-4"/>
    <property type="match status" value="1"/>
</dbReference>
<dbReference type="PANTHER" id="PTHR30426">
    <property type="entry name" value="4-HYDROXY-3-METHYLBUT-2-ENYL DIPHOSPHATE REDUCTASE"/>
    <property type="match status" value="1"/>
</dbReference>
<dbReference type="PANTHER" id="PTHR30426:SF0">
    <property type="entry name" value="4-HYDROXY-3-METHYLBUT-2-ENYL DIPHOSPHATE REDUCTASE"/>
    <property type="match status" value="1"/>
</dbReference>
<dbReference type="Pfam" id="PF02401">
    <property type="entry name" value="LYTB"/>
    <property type="match status" value="1"/>
</dbReference>
<gene>
    <name evidence="1" type="primary">ispH</name>
    <name type="ordered locus">FTF0833</name>
</gene>
<proteinExistence type="inferred from homology"/>
<reference key="1">
    <citation type="journal article" date="2007" name="PLoS ONE">
        <title>Genome sequencing shows that European isolates of Francisella tularensis subspecies tularensis are almost identical to US laboratory strain Schu S4.</title>
        <authorList>
            <person name="Chaudhuri R.R."/>
            <person name="Ren C.-P."/>
            <person name="Desmond L."/>
            <person name="Vincent G.A."/>
            <person name="Silman N.J."/>
            <person name="Brehm J.K."/>
            <person name="Elmore M.J."/>
            <person name="Hudson M.J."/>
            <person name="Forsman M."/>
            <person name="Isherwood K.E."/>
            <person name="Gurycova D."/>
            <person name="Minton N.P."/>
            <person name="Titball R.W."/>
            <person name="Pallen M.J."/>
            <person name="Vipond R."/>
        </authorList>
    </citation>
    <scope>NUCLEOTIDE SEQUENCE [LARGE SCALE GENOMIC DNA]</scope>
    <source>
        <strain>FSC 198</strain>
    </source>
</reference>
<name>ISPH_FRAT1</name>
<protein>
    <recommendedName>
        <fullName evidence="1">4-hydroxy-3-methylbut-2-enyl diphosphate reductase</fullName>
        <shortName evidence="1">HMBPP reductase</shortName>
        <ecNumber evidence="1">1.17.7.4</ecNumber>
    </recommendedName>
</protein>
<sequence length="318" mass="35152">MKILLANPRGFCAGVSRAVETVEKVLEVEKSPVYVRHEVVHNKVVVDSLKKKGVVFVKEVDEVPDDAVCIFSAHGVSLKVEEAAAKKNLVLYDATCPLVTKVHRGVRLASNNDAECILIGHKGHPEVQGTMGQYRSKKGAIYLIESEEDLNKLTIKDPDNLYYATQTTLSVDETQGIIQALKDKYPNIKGPKKEDICYATQNRQTAIKAMLKHIDVLVVVGSQNSSNSNRLKELATLEGIDAYLVDNPKDVDKLWFDNKKVCGVSAGASAPEYLVQQIISQISKVCSTEVEEFEGIKEEVYFPLPRLLKQKIGTGKVE</sequence>
<accession>Q14I06</accession>